<keyword id="KW-0007">Acetylation</keyword>
<keyword id="KW-0966">Cell projection</keyword>
<keyword id="KW-0157">Chromophore</keyword>
<keyword id="KW-1015">Disulfide bond</keyword>
<keyword id="KW-0297">G-protein coupled receptor</keyword>
<keyword id="KW-0325">Glycoprotein</keyword>
<keyword id="KW-0449">Lipoprotein</keyword>
<keyword id="KW-0472">Membrane</keyword>
<keyword id="KW-0479">Metal-binding</keyword>
<keyword id="KW-0564">Palmitate</keyword>
<keyword id="KW-0597">Phosphoprotein</keyword>
<keyword id="KW-0600">Photoreceptor protein</keyword>
<keyword id="KW-0675">Receptor</keyword>
<keyword id="KW-0681">Retinal protein</keyword>
<keyword id="KW-0716">Sensory transduction</keyword>
<keyword id="KW-0807">Transducer</keyword>
<keyword id="KW-0812">Transmembrane</keyword>
<keyword id="KW-1133">Transmembrane helix</keyword>
<keyword id="KW-0844">Vision</keyword>
<keyword id="KW-0862">Zinc</keyword>
<evidence type="ECO:0000250" key="1">
    <source>
        <dbReference type="UniProtKB" id="P02699"/>
    </source>
</evidence>
<evidence type="ECO:0000250" key="2">
    <source>
        <dbReference type="UniProtKB" id="P02700"/>
    </source>
</evidence>
<evidence type="ECO:0000250" key="3">
    <source>
        <dbReference type="UniProtKB" id="P08100"/>
    </source>
</evidence>
<evidence type="ECO:0000255" key="4"/>
<evidence type="ECO:0000255" key="5">
    <source>
        <dbReference type="PROSITE-ProRule" id="PRU00521"/>
    </source>
</evidence>
<evidence type="ECO:0000305" key="6"/>
<accession>Q8HY69</accession>
<reference key="1">
    <citation type="journal article" date="2003" name="Gene">
        <title>The rod opsin pigments from two marsupial species, the South American bare-tailed woolly opossum and the Australian fat-tailed dunnart.</title>
        <authorList>
            <person name="Hunt D.M."/>
            <person name="Arrese C.A."/>
            <person name="von Dornum M."/>
            <person name="Rodger J."/>
            <person name="Oddy A."/>
            <person name="Cowing J.A."/>
            <person name="Ager E.I."/>
            <person name="Bowmaker J.K."/>
            <person name="Beazley L.D."/>
            <person name="Shand J."/>
        </authorList>
    </citation>
    <scope>NUCLEOTIDE SEQUENCE [MRNA]</scope>
</reference>
<comment type="function">
    <text evidence="1 3">Photoreceptor required for image-forming vision at low light intensity. Required for photoreceptor cell viability after birth (By similarity). Light-induced isomerization of 11-cis to all-trans retinal triggers a conformational change that activates signaling via G-proteins. Subsequent receptor phosphorylation mediates displacement of the bound G-protein alpha subunit by the arrestin SAG and terminates signaling (By similarity).</text>
</comment>
<comment type="subunit">
    <text evidence="1 3">Homodimer (By similarity). May form a complex composed of RHO, GRK1 and RCVRN in a Ca(2+)-dependent manner; RCVRN prevents the interaction between GRK1 and RHO (By similarity). Interacts with GRK1 (By similarity). Interacts (phosphorylated form) with SAG. Interacts with GNAT1. Interacts with GNAT3. SAG and G-proteins compete for a common binding site (By similarity). Interacts with PRCD; the interaction promotes PRCD stability. Forms a complex with ASAP1 and ARF4. Forms a complex with ASAP1, RAB11A, Rabin8/RAB3IP, ARF4 and RAB11FIP3; the complex regulates Golgi-to-cilia rhodopsin/RHO transport in photoreceptors (By similarity).</text>
</comment>
<comment type="subcellular location">
    <subcellularLocation>
        <location evidence="1">Membrane</location>
        <topology evidence="1">Multi-pass membrane protein</topology>
    </subcellularLocation>
    <subcellularLocation>
        <location evidence="1">Cell projection</location>
        <location evidence="1">Cilium</location>
        <location evidence="1">Photoreceptor outer segment</location>
    </subcellularLocation>
    <text evidence="3">Synthesized in the inner segment (IS) of rod photoreceptor cells before vectorial transport to disk membranes in the rod outer segment (OS) photosensory cilia.</text>
</comment>
<comment type="PTM">
    <text evidence="1">Phosphorylated on some or all of the serine and threonine residues present in the C-terminal region.</text>
</comment>
<comment type="PTM">
    <text evidence="1">Contains one covalently linked retinal chromophore. Upon light absorption, the covalently bound 11-cis-retinal is converted to all-trans-retinal. After hydrolysis of the Schiff base and release of the covalently bound all-trans-retinal, active rhodopsin is regenerated by binding of a fresh molecule of 11-cis-retinal.</text>
</comment>
<comment type="similarity">
    <text evidence="5">Belongs to the G-protein coupled receptor 1 family. Opsin subfamily.</text>
</comment>
<sequence length="348" mass="39064">MNGTEGPNFYVPYSNKSGVVRSPYEEPQYYLAEPWMFSCLAAYMFMLIVLGFPINFLTLYVTIQHKKLRTPLNYILLNLAVADLFMVICGFTTTLVTSLNGYFVFGTTGCLVEGFFATTGGEVALWALVVLAIERYIVVCKPMSNFRFGENHAIMGVAFTWIMALACSVPPIFGWSRYIPEGMQCSCGIDYYTLNPEFNNESFVIYMFVVHFIIPLTVIFFCYGQLVFTVKEAAAQQQESATTQKAEKEVTRMVIIMVIAFLICWVPYASVAFYIFTHQGSDFGPIFMTLPAFFAKSSSIYNPVIYIMMNKQFRNCMITTLCCGKNPLGDDEASTTASKTETSQVAPA</sequence>
<organism>
    <name type="scientific">Sminthopsis crassicaudata</name>
    <name type="common">Fat-tailed dunnart</name>
    <name type="synonym">Phascogale crassicaudata</name>
    <dbReference type="NCBI Taxonomy" id="9301"/>
    <lineage>
        <taxon>Eukaryota</taxon>
        <taxon>Metazoa</taxon>
        <taxon>Chordata</taxon>
        <taxon>Craniata</taxon>
        <taxon>Vertebrata</taxon>
        <taxon>Euteleostomi</taxon>
        <taxon>Mammalia</taxon>
        <taxon>Metatheria</taxon>
        <taxon>Dasyuromorphia</taxon>
        <taxon>Dasyuridae</taxon>
        <taxon>Sminthopsis</taxon>
    </lineage>
</organism>
<name>OPSD_SMICR</name>
<gene>
    <name type="primary">RHO</name>
    <name type="synonym">RH1</name>
</gene>
<dbReference type="EMBL" id="AY159786">
    <property type="protein sequence ID" value="AAN86046.2"/>
    <property type="molecule type" value="mRNA"/>
</dbReference>
<dbReference type="SMR" id="Q8HY69"/>
<dbReference type="GlyCosmos" id="Q8HY69">
    <property type="glycosylation" value="2 sites, No reported glycans"/>
</dbReference>
<dbReference type="GO" id="GO:0016020">
    <property type="term" value="C:membrane"/>
    <property type="evidence" value="ECO:0000250"/>
    <property type="project" value="UniProtKB"/>
</dbReference>
<dbReference type="GO" id="GO:0097381">
    <property type="term" value="C:photoreceptor disc membrane"/>
    <property type="evidence" value="ECO:0000250"/>
    <property type="project" value="UniProtKB"/>
</dbReference>
<dbReference type="GO" id="GO:0060342">
    <property type="term" value="C:photoreceptor inner segment membrane"/>
    <property type="evidence" value="ECO:0000250"/>
    <property type="project" value="UniProtKB"/>
</dbReference>
<dbReference type="GO" id="GO:0042622">
    <property type="term" value="C:photoreceptor outer segment membrane"/>
    <property type="evidence" value="ECO:0000250"/>
    <property type="project" value="UniProtKB"/>
</dbReference>
<dbReference type="GO" id="GO:0005886">
    <property type="term" value="C:plasma membrane"/>
    <property type="evidence" value="ECO:0000250"/>
    <property type="project" value="UniProtKB"/>
</dbReference>
<dbReference type="GO" id="GO:0005502">
    <property type="term" value="F:11-cis retinal binding"/>
    <property type="evidence" value="ECO:0000250"/>
    <property type="project" value="UniProtKB"/>
</dbReference>
<dbReference type="GO" id="GO:0008020">
    <property type="term" value="F:G protein-coupled photoreceptor activity"/>
    <property type="evidence" value="ECO:0000250"/>
    <property type="project" value="UniProtKB"/>
</dbReference>
<dbReference type="GO" id="GO:0046872">
    <property type="term" value="F:metal ion binding"/>
    <property type="evidence" value="ECO:0007669"/>
    <property type="project" value="UniProtKB-KW"/>
</dbReference>
<dbReference type="GO" id="GO:0016038">
    <property type="term" value="P:absorption of visible light"/>
    <property type="evidence" value="ECO:0000250"/>
    <property type="project" value="UniProtKB"/>
</dbReference>
<dbReference type="GO" id="GO:0016056">
    <property type="term" value="P:G protein-coupled opsin signaling pathway"/>
    <property type="evidence" value="ECO:0000250"/>
    <property type="project" value="UniProtKB"/>
</dbReference>
<dbReference type="GO" id="GO:0007186">
    <property type="term" value="P:G protein-coupled receptor signaling pathway"/>
    <property type="evidence" value="ECO:0000250"/>
    <property type="project" value="UniProtKB"/>
</dbReference>
<dbReference type="GO" id="GO:0007601">
    <property type="term" value="P:visual perception"/>
    <property type="evidence" value="ECO:0007669"/>
    <property type="project" value="UniProtKB-KW"/>
</dbReference>
<dbReference type="CDD" id="cd15080">
    <property type="entry name" value="7tmA_MWS_opsin"/>
    <property type="match status" value="1"/>
</dbReference>
<dbReference type="FunFam" id="1.20.1070.10:FF:000018">
    <property type="entry name" value="Rhodopsin"/>
    <property type="match status" value="1"/>
</dbReference>
<dbReference type="Gene3D" id="1.20.1070.10">
    <property type="entry name" value="Rhodopsin 7-helix transmembrane proteins"/>
    <property type="match status" value="1"/>
</dbReference>
<dbReference type="InterPro" id="IPR050125">
    <property type="entry name" value="GPCR_opsins"/>
</dbReference>
<dbReference type="InterPro" id="IPR000276">
    <property type="entry name" value="GPCR_Rhodpsn"/>
</dbReference>
<dbReference type="InterPro" id="IPR017452">
    <property type="entry name" value="GPCR_Rhodpsn_7TM"/>
</dbReference>
<dbReference type="InterPro" id="IPR001760">
    <property type="entry name" value="Opsin"/>
</dbReference>
<dbReference type="InterPro" id="IPR027430">
    <property type="entry name" value="Retinal_BS"/>
</dbReference>
<dbReference type="InterPro" id="IPR000732">
    <property type="entry name" value="Rhodopsin"/>
</dbReference>
<dbReference type="InterPro" id="IPR019477">
    <property type="entry name" value="Rhodopsin_N"/>
</dbReference>
<dbReference type="PANTHER" id="PTHR24240">
    <property type="entry name" value="OPSIN"/>
    <property type="match status" value="1"/>
</dbReference>
<dbReference type="Pfam" id="PF00001">
    <property type="entry name" value="7tm_1"/>
    <property type="match status" value="1"/>
</dbReference>
<dbReference type="Pfam" id="PF10413">
    <property type="entry name" value="Rhodopsin_N"/>
    <property type="match status" value="1"/>
</dbReference>
<dbReference type="PRINTS" id="PR00237">
    <property type="entry name" value="GPCRRHODOPSN"/>
</dbReference>
<dbReference type="PRINTS" id="PR00238">
    <property type="entry name" value="OPSIN"/>
</dbReference>
<dbReference type="PRINTS" id="PR00579">
    <property type="entry name" value="RHODOPSIN"/>
</dbReference>
<dbReference type="SMART" id="SM01381">
    <property type="entry name" value="7TM_GPCR_Srsx"/>
    <property type="match status" value="1"/>
</dbReference>
<dbReference type="SUPFAM" id="SSF81321">
    <property type="entry name" value="Family A G protein-coupled receptor-like"/>
    <property type="match status" value="1"/>
</dbReference>
<dbReference type="PROSITE" id="PS00237">
    <property type="entry name" value="G_PROTEIN_RECEP_F1_1"/>
    <property type="match status" value="1"/>
</dbReference>
<dbReference type="PROSITE" id="PS50262">
    <property type="entry name" value="G_PROTEIN_RECEP_F1_2"/>
    <property type="match status" value="1"/>
</dbReference>
<dbReference type="PROSITE" id="PS00238">
    <property type="entry name" value="OPSIN"/>
    <property type="match status" value="1"/>
</dbReference>
<proteinExistence type="evidence at transcript level"/>
<protein>
    <recommendedName>
        <fullName>Rhodopsin</fullName>
    </recommendedName>
</protein>
<feature type="chain" id="PRO_0000197720" description="Rhodopsin">
    <location>
        <begin position="1"/>
        <end position="348"/>
    </location>
</feature>
<feature type="topological domain" description="Extracellular" evidence="6">
    <location>
        <begin position="1"/>
        <end position="36"/>
    </location>
</feature>
<feature type="transmembrane region" description="Helical; Name=1" evidence="1">
    <location>
        <begin position="37"/>
        <end position="61"/>
    </location>
</feature>
<feature type="topological domain" description="Cytoplasmic" evidence="6">
    <location>
        <begin position="62"/>
        <end position="73"/>
    </location>
</feature>
<feature type="transmembrane region" description="Helical; Name=2" evidence="1">
    <location>
        <begin position="74"/>
        <end position="96"/>
    </location>
</feature>
<feature type="topological domain" description="Extracellular" evidence="6">
    <location>
        <begin position="97"/>
        <end position="110"/>
    </location>
</feature>
<feature type="transmembrane region" description="Helical; Name=3" evidence="1">
    <location>
        <begin position="111"/>
        <end position="133"/>
    </location>
</feature>
<feature type="topological domain" description="Cytoplasmic" evidence="6">
    <location>
        <begin position="134"/>
        <end position="152"/>
    </location>
</feature>
<feature type="transmembrane region" description="Helical; Name=4" evidence="1">
    <location>
        <begin position="153"/>
        <end position="173"/>
    </location>
</feature>
<feature type="topological domain" description="Extracellular" evidence="6">
    <location>
        <begin position="174"/>
        <end position="202"/>
    </location>
</feature>
<feature type="transmembrane region" description="Helical; Name=5" evidence="1">
    <location>
        <begin position="203"/>
        <end position="224"/>
    </location>
</feature>
<feature type="topological domain" description="Cytoplasmic" evidence="6">
    <location>
        <begin position="225"/>
        <end position="252"/>
    </location>
</feature>
<feature type="transmembrane region" description="Helical; Name=6" evidence="1">
    <location>
        <begin position="253"/>
        <end position="274"/>
    </location>
</feature>
<feature type="topological domain" description="Extracellular" evidence="6">
    <location>
        <begin position="275"/>
        <end position="286"/>
    </location>
</feature>
<feature type="transmembrane region" description="Helical; Name=7" evidence="1">
    <location>
        <begin position="287"/>
        <end position="308"/>
    </location>
</feature>
<feature type="topological domain" description="Cytoplasmic" evidence="6">
    <location>
        <begin position="309"/>
        <end position="348"/>
    </location>
</feature>
<feature type="region of interest" description="Interaction with SAG" evidence="1">
    <location>
        <begin position="330"/>
        <end position="348"/>
    </location>
</feature>
<feature type="short sequence motif" description="'Ionic lock' involved in activated form stabilization" evidence="1">
    <location>
        <begin position="134"/>
        <end position="136"/>
    </location>
</feature>
<feature type="binding site" evidence="1">
    <location>
        <position position="201"/>
    </location>
    <ligand>
        <name>Zn(2+)</name>
        <dbReference type="ChEBI" id="CHEBI:29105"/>
    </ligand>
</feature>
<feature type="binding site" evidence="1">
    <location>
        <position position="279"/>
    </location>
    <ligand>
        <name>Zn(2+)</name>
        <dbReference type="ChEBI" id="CHEBI:29105"/>
    </ligand>
</feature>
<feature type="site" description="Plays an important role in the conformation switch to the active conformation" evidence="1">
    <location>
        <position position="113"/>
    </location>
</feature>
<feature type="modified residue" description="N-acetylmethionine" evidence="1">
    <location>
        <position position="1"/>
    </location>
</feature>
<feature type="modified residue" description="N6-(retinylidene)lysine" evidence="1">
    <location>
        <position position="296"/>
    </location>
</feature>
<feature type="modified residue" description="Phosphoserine" evidence="2">
    <location>
        <position position="334"/>
    </location>
</feature>
<feature type="modified residue" description="Phosphothreonine" evidence="2">
    <location>
        <position position="335"/>
    </location>
</feature>
<feature type="modified residue" description="Phosphothreonine" evidence="2">
    <location>
        <position position="336"/>
    </location>
</feature>
<feature type="modified residue" description="Phosphoserine" evidence="2">
    <location>
        <position position="338"/>
    </location>
</feature>
<feature type="modified residue" description="Phosphothreonine" evidence="1">
    <location>
        <position position="340"/>
    </location>
</feature>
<feature type="modified residue" description="Phosphothreonine" evidence="1">
    <location>
        <position position="342"/>
    </location>
</feature>
<feature type="modified residue" description="Phosphoserine" evidence="1">
    <location>
        <position position="343"/>
    </location>
</feature>
<feature type="lipid moiety-binding region" description="S-palmitoyl cysteine" evidence="1">
    <location>
        <position position="322"/>
    </location>
</feature>
<feature type="lipid moiety-binding region" description="S-palmitoyl cysteine" evidence="1">
    <location>
        <position position="323"/>
    </location>
</feature>
<feature type="glycosylation site" description="N-linked (GlcNAc...) asparagine" evidence="4">
    <location>
        <position position="2"/>
    </location>
</feature>
<feature type="glycosylation site" description="N-linked (GlcNAc...) asparagine" evidence="4">
    <location>
        <position position="15"/>
    </location>
</feature>
<feature type="disulfide bond" evidence="5">
    <location>
        <begin position="110"/>
        <end position="187"/>
    </location>
</feature>